<accession>B1L5H2</accession>
<proteinExistence type="inferred from homology"/>
<evidence type="ECO:0000255" key="1">
    <source>
        <dbReference type="HAMAP-Rule" id="MF_00198"/>
    </source>
</evidence>
<protein>
    <recommendedName>
        <fullName evidence="1">Polyamine aminopropyltransferase</fullName>
    </recommendedName>
    <alternativeName>
        <fullName evidence="1">Putrescine aminopropyltransferase</fullName>
        <shortName evidence="1">PAPT</shortName>
    </alternativeName>
    <alternativeName>
        <fullName evidence="1">Spermidine synthase</fullName>
        <shortName evidence="1">SPDS</shortName>
        <shortName evidence="1">SPDSY</shortName>
        <ecNumber evidence="1">2.5.1.16</ecNumber>
    </alternativeName>
</protein>
<comment type="function">
    <text evidence="1">Catalyzes the irreversible transfer of a propylamine group from the amino donor S-adenosylmethioninamine (decarboxy-AdoMet) to putrescine (1,4-diaminobutane) to yield spermidine.</text>
</comment>
<comment type="catalytic activity">
    <reaction evidence="1">
        <text>S-adenosyl 3-(methylsulfanyl)propylamine + putrescine = S-methyl-5'-thioadenosine + spermidine + H(+)</text>
        <dbReference type="Rhea" id="RHEA:12721"/>
        <dbReference type="ChEBI" id="CHEBI:15378"/>
        <dbReference type="ChEBI" id="CHEBI:17509"/>
        <dbReference type="ChEBI" id="CHEBI:57443"/>
        <dbReference type="ChEBI" id="CHEBI:57834"/>
        <dbReference type="ChEBI" id="CHEBI:326268"/>
        <dbReference type="EC" id="2.5.1.16"/>
    </reaction>
</comment>
<comment type="pathway">
    <text evidence="1">Amine and polyamine biosynthesis; spermidine biosynthesis; spermidine from putrescine: step 1/1.</text>
</comment>
<comment type="subunit">
    <text evidence="1">Homodimer or homotetramer.</text>
</comment>
<comment type="subcellular location">
    <subcellularLocation>
        <location evidence="1">Cytoplasm</location>
    </subcellularLocation>
</comment>
<comment type="similarity">
    <text evidence="1">Belongs to the spermidine/spermine synthase family.</text>
</comment>
<sequence>MIISAYIMPLRLPKPGLRNIDGHLLYLEHAGPHMATLQIVNNVLSSEMTSAGQLVETVDLELFGKSLFIEHIIMITLYDEYIYHETLVHPTLLSLENPEKVLIIGGGDGGALREVLKHPVGEVTLVELDKSVIETVKKHIPEVPGGSFEDPRLKLIIGDGRKYVESCEEKYDAVILDLTDPYGQAVRLYTKEFYSMVRKLIRDGGLMVTHSEGVHVNRVTFQRIYRAIRETFKRHAVAKAYVPSFNDEWSFSFGSDYLVPPELDREKLERRFNERLKGKTRFYLPEIHYALFSLPAYLKAALEEEVPPSTDDNPAEIYEES</sequence>
<reference key="1">
    <citation type="journal article" date="2008" name="Proc. Natl. Acad. Sci. U.S.A.">
        <title>A korarchaeal genome reveals new insights into the evolution of the Archaea.</title>
        <authorList>
            <person name="Elkins J.G."/>
            <person name="Podar M."/>
            <person name="Graham D.E."/>
            <person name="Makarova K.S."/>
            <person name="Wolf Y."/>
            <person name="Randau L."/>
            <person name="Hedlund B.P."/>
            <person name="Brochier-Armanet C."/>
            <person name="Kunin V."/>
            <person name="Anderson I."/>
            <person name="Lapidus A."/>
            <person name="Goltsman E."/>
            <person name="Barry K."/>
            <person name="Koonin E.V."/>
            <person name="Hugenholtz P."/>
            <person name="Kyrpides N."/>
            <person name="Wanner G."/>
            <person name="Richardson P."/>
            <person name="Keller M."/>
            <person name="Stetter K.O."/>
        </authorList>
    </citation>
    <scope>NUCLEOTIDE SEQUENCE [LARGE SCALE GENOMIC DNA]</scope>
    <source>
        <strain>OPF8</strain>
    </source>
</reference>
<organism>
    <name type="scientific">Korarchaeum cryptofilum (strain OPF8)</name>
    <dbReference type="NCBI Taxonomy" id="374847"/>
    <lineage>
        <taxon>Archaea</taxon>
        <taxon>Thermoproteota</taxon>
        <taxon>Candidatus Korarchaeia</taxon>
        <taxon>Candidatus Korarchaeales</taxon>
        <taxon>Candidatus Korarchaeaceae</taxon>
        <taxon>Candidatus Korarchaeum</taxon>
    </lineage>
</organism>
<keyword id="KW-0963">Cytoplasm</keyword>
<keyword id="KW-0620">Polyamine biosynthesis</keyword>
<keyword id="KW-1185">Reference proteome</keyword>
<keyword id="KW-0745">Spermidine biosynthesis</keyword>
<keyword id="KW-0808">Transferase</keyword>
<feature type="chain" id="PRO_1000099290" description="Polyamine aminopropyltransferase">
    <location>
        <begin position="1"/>
        <end position="321"/>
    </location>
</feature>
<feature type="domain" description="PABS" evidence="1">
    <location>
        <begin position="23"/>
        <end position="256"/>
    </location>
</feature>
<feature type="active site" description="Proton acceptor" evidence="1">
    <location>
        <position position="177"/>
    </location>
</feature>
<feature type="binding site" evidence="1">
    <location>
        <position position="53"/>
    </location>
    <ligand>
        <name>S-methyl-5'-thioadenosine</name>
        <dbReference type="ChEBI" id="CHEBI:17509"/>
    </ligand>
</feature>
<feature type="binding site" evidence="1">
    <location>
        <position position="84"/>
    </location>
    <ligand>
        <name>spermidine</name>
        <dbReference type="ChEBI" id="CHEBI:57834"/>
    </ligand>
</feature>
<feature type="binding site" evidence="1">
    <location>
        <position position="108"/>
    </location>
    <ligand>
        <name>spermidine</name>
        <dbReference type="ChEBI" id="CHEBI:57834"/>
    </ligand>
</feature>
<feature type="binding site" evidence="1">
    <location>
        <position position="127"/>
    </location>
    <ligand>
        <name>S-methyl-5'-thioadenosine</name>
        <dbReference type="ChEBI" id="CHEBI:17509"/>
    </ligand>
</feature>
<feature type="binding site" evidence="1">
    <location>
        <begin position="159"/>
        <end position="160"/>
    </location>
    <ligand>
        <name>S-methyl-5'-thioadenosine</name>
        <dbReference type="ChEBI" id="CHEBI:17509"/>
    </ligand>
</feature>
<name>SPEE_KORCO</name>
<dbReference type="EC" id="2.5.1.16" evidence="1"/>
<dbReference type="EMBL" id="CP000968">
    <property type="protein sequence ID" value="ACB07701.1"/>
    <property type="molecule type" value="Genomic_DNA"/>
</dbReference>
<dbReference type="SMR" id="B1L5H2"/>
<dbReference type="FunCoup" id="B1L5H2">
    <property type="interactions" value="166"/>
</dbReference>
<dbReference type="STRING" id="374847.Kcr_0955"/>
<dbReference type="EnsemblBacteria" id="ACB07701">
    <property type="protein sequence ID" value="ACB07701"/>
    <property type="gene ID" value="Kcr_0955"/>
</dbReference>
<dbReference type="KEGG" id="kcr:Kcr_0955"/>
<dbReference type="eggNOG" id="arCOG00050">
    <property type="taxonomic scope" value="Archaea"/>
</dbReference>
<dbReference type="HOGENOM" id="CLU_048199_0_1_2"/>
<dbReference type="InParanoid" id="B1L5H2"/>
<dbReference type="PhylomeDB" id="B1L5H2"/>
<dbReference type="UniPathway" id="UPA00248">
    <property type="reaction ID" value="UER00314"/>
</dbReference>
<dbReference type="Proteomes" id="UP000001686">
    <property type="component" value="Chromosome"/>
</dbReference>
<dbReference type="GO" id="GO:0005737">
    <property type="term" value="C:cytoplasm"/>
    <property type="evidence" value="ECO:0007669"/>
    <property type="project" value="UniProtKB-SubCell"/>
</dbReference>
<dbReference type="GO" id="GO:0004766">
    <property type="term" value="F:spermidine synthase activity"/>
    <property type="evidence" value="ECO:0007669"/>
    <property type="project" value="UniProtKB-UniRule"/>
</dbReference>
<dbReference type="GO" id="GO:0010487">
    <property type="term" value="F:thermospermine synthase activity"/>
    <property type="evidence" value="ECO:0000318"/>
    <property type="project" value="GO_Central"/>
</dbReference>
<dbReference type="GO" id="GO:0006596">
    <property type="term" value="P:polyamine biosynthetic process"/>
    <property type="evidence" value="ECO:0000318"/>
    <property type="project" value="GO_Central"/>
</dbReference>
<dbReference type="GO" id="GO:0008295">
    <property type="term" value="P:spermidine biosynthetic process"/>
    <property type="evidence" value="ECO:0007669"/>
    <property type="project" value="UniProtKB-UniRule"/>
</dbReference>
<dbReference type="CDD" id="cd02440">
    <property type="entry name" value="AdoMet_MTases"/>
    <property type="match status" value="1"/>
</dbReference>
<dbReference type="FunFam" id="3.40.50.150:FF:000088">
    <property type="entry name" value="Polyamine aminopropyltransferase"/>
    <property type="match status" value="1"/>
</dbReference>
<dbReference type="Gene3D" id="3.40.50.150">
    <property type="entry name" value="Vaccinia Virus protein VP39"/>
    <property type="match status" value="1"/>
</dbReference>
<dbReference type="HAMAP" id="MF_00198">
    <property type="entry name" value="Spermidine_synth"/>
    <property type="match status" value="1"/>
</dbReference>
<dbReference type="InterPro" id="IPR030374">
    <property type="entry name" value="PABS"/>
</dbReference>
<dbReference type="InterPro" id="IPR030373">
    <property type="entry name" value="PABS_CS"/>
</dbReference>
<dbReference type="InterPro" id="IPR029063">
    <property type="entry name" value="SAM-dependent_MTases_sf"/>
</dbReference>
<dbReference type="InterPro" id="IPR001045">
    <property type="entry name" value="Spermi_synthase"/>
</dbReference>
<dbReference type="NCBIfam" id="NF002010">
    <property type="entry name" value="PRK00811.1"/>
    <property type="match status" value="1"/>
</dbReference>
<dbReference type="PANTHER" id="PTHR43317">
    <property type="entry name" value="THERMOSPERMINE SYNTHASE ACAULIS5"/>
    <property type="match status" value="1"/>
</dbReference>
<dbReference type="PANTHER" id="PTHR43317:SF1">
    <property type="entry name" value="THERMOSPERMINE SYNTHASE ACAULIS5"/>
    <property type="match status" value="1"/>
</dbReference>
<dbReference type="Pfam" id="PF01564">
    <property type="entry name" value="Spermine_synth"/>
    <property type="match status" value="1"/>
</dbReference>
<dbReference type="SUPFAM" id="SSF53335">
    <property type="entry name" value="S-adenosyl-L-methionine-dependent methyltransferases"/>
    <property type="match status" value="1"/>
</dbReference>
<dbReference type="PROSITE" id="PS01330">
    <property type="entry name" value="PABS_1"/>
    <property type="match status" value="1"/>
</dbReference>
<dbReference type="PROSITE" id="PS51006">
    <property type="entry name" value="PABS_2"/>
    <property type="match status" value="1"/>
</dbReference>
<gene>
    <name evidence="1" type="primary">speE</name>
    <name type="ordered locus">Kcr_0955</name>
</gene>